<accession>Q5ZX01</accession>
<name>AROK_LEGPH</name>
<keyword id="KW-0028">Amino-acid biosynthesis</keyword>
<keyword id="KW-0057">Aromatic amino acid biosynthesis</keyword>
<keyword id="KW-0067">ATP-binding</keyword>
<keyword id="KW-0963">Cytoplasm</keyword>
<keyword id="KW-0418">Kinase</keyword>
<keyword id="KW-0460">Magnesium</keyword>
<keyword id="KW-0479">Metal-binding</keyword>
<keyword id="KW-0547">Nucleotide-binding</keyword>
<keyword id="KW-1185">Reference proteome</keyword>
<keyword id="KW-0808">Transferase</keyword>
<feature type="chain" id="PRO_0000237891" description="Shikimate kinase">
    <location>
        <begin position="1"/>
        <end position="175"/>
    </location>
</feature>
<feature type="binding site" evidence="1">
    <location>
        <begin position="16"/>
        <end position="21"/>
    </location>
    <ligand>
        <name>ATP</name>
        <dbReference type="ChEBI" id="CHEBI:30616"/>
    </ligand>
</feature>
<feature type="binding site" evidence="1">
    <location>
        <position position="20"/>
    </location>
    <ligand>
        <name>Mg(2+)</name>
        <dbReference type="ChEBI" id="CHEBI:18420"/>
    </ligand>
</feature>
<feature type="binding site" evidence="1">
    <location>
        <position position="38"/>
    </location>
    <ligand>
        <name>substrate</name>
    </ligand>
</feature>
<feature type="binding site" evidence="1">
    <location>
        <position position="62"/>
    </location>
    <ligand>
        <name>substrate</name>
    </ligand>
</feature>
<feature type="binding site" evidence="1">
    <location>
        <position position="84"/>
    </location>
    <ligand>
        <name>substrate</name>
    </ligand>
</feature>
<feature type="binding site" evidence="1">
    <location>
        <position position="122"/>
    </location>
    <ligand>
        <name>ATP</name>
        <dbReference type="ChEBI" id="CHEBI:30616"/>
    </ligand>
</feature>
<feature type="binding site" evidence="1">
    <location>
        <position position="141"/>
    </location>
    <ligand>
        <name>substrate</name>
    </ligand>
</feature>
<sequence>MSIVKVRNIFLIGPMGAGKSTIGRALAKELKLEFYDSDEVIEERAGADISWIFDIEGEEGFRRREQKVIDELTQKTNIVLATGGGVVITPENRNALAGRGTVIYLKTSLQQQFERTKRDTKRPLLQTEDLEGRLESLRDEREPFYDELADVSFETDKLTVKAVANNIIKYLYGEV</sequence>
<proteinExistence type="inferred from homology"/>
<dbReference type="EC" id="2.7.1.71" evidence="1"/>
<dbReference type="EMBL" id="AE017354">
    <property type="protein sequence ID" value="AAU27019.1"/>
    <property type="molecule type" value="Genomic_DNA"/>
</dbReference>
<dbReference type="RefSeq" id="YP_094966.1">
    <property type="nucleotide sequence ID" value="NC_002942.5"/>
</dbReference>
<dbReference type="SMR" id="Q5ZX01"/>
<dbReference type="STRING" id="272624.lpg0932"/>
<dbReference type="PaxDb" id="272624-lpg0932"/>
<dbReference type="KEGG" id="lpn:lpg0932"/>
<dbReference type="PATRIC" id="fig|272624.6.peg.964"/>
<dbReference type="eggNOG" id="COG0703">
    <property type="taxonomic scope" value="Bacteria"/>
</dbReference>
<dbReference type="HOGENOM" id="CLU_057607_2_2_6"/>
<dbReference type="OrthoDB" id="9800332at2"/>
<dbReference type="UniPathway" id="UPA00053">
    <property type="reaction ID" value="UER00088"/>
</dbReference>
<dbReference type="Proteomes" id="UP000000609">
    <property type="component" value="Chromosome"/>
</dbReference>
<dbReference type="GO" id="GO:0005829">
    <property type="term" value="C:cytosol"/>
    <property type="evidence" value="ECO:0007669"/>
    <property type="project" value="TreeGrafter"/>
</dbReference>
<dbReference type="GO" id="GO:0005524">
    <property type="term" value="F:ATP binding"/>
    <property type="evidence" value="ECO:0007669"/>
    <property type="project" value="UniProtKB-UniRule"/>
</dbReference>
<dbReference type="GO" id="GO:0000287">
    <property type="term" value="F:magnesium ion binding"/>
    <property type="evidence" value="ECO:0007669"/>
    <property type="project" value="UniProtKB-UniRule"/>
</dbReference>
<dbReference type="GO" id="GO:0004765">
    <property type="term" value="F:shikimate kinase activity"/>
    <property type="evidence" value="ECO:0007669"/>
    <property type="project" value="UniProtKB-UniRule"/>
</dbReference>
<dbReference type="GO" id="GO:0008652">
    <property type="term" value="P:amino acid biosynthetic process"/>
    <property type="evidence" value="ECO:0007669"/>
    <property type="project" value="UniProtKB-KW"/>
</dbReference>
<dbReference type="GO" id="GO:0009073">
    <property type="term" value="P:aromatic amino acid family biosynthetic process"/>
    <property type="evidence" value="ECO:0007669"/>
    <property type="project" value="UniProtKB-KW"/>
</dbReference>
<dbReference type="GO" id="GO:0009423">
    <property type="term" value="P:chorismate biosynthetic process"/>
    <property type="evidence" value="ECO:0007669"/>
    <property type="project" value="UniProtKB-UniRule"/>
</dbReference>
<dbReference type="CDD" id="cd00464">
    <property type="entry name" value="SK"/>
    <property type="match status" value="1"/>
</dbReference>
<dbReference type="Gene3D" id="3.40.50.300">
    <property type="entry name" value="P-loop containing nucleotide triphosphate hydrolases"/>
    <property type="match status" value="1"/>
</dbReference>
<dbReference type="HAMAP" id="MF_00109">
    <property type="entry name" value="Shikimate_kinase"/>
    <property type="match status" value="1"/>
</dbReference>
<dbReference type="InterPro" id="IPR027417">
    <property type="entry name" value="P-loop_NTPase"/>
</dbReference>
<dbReference type="InterPro" id="IPR031322">
    <property type="entry name" value="Shikimate/glucono_kinase"/>
</dbReference>
<dbReference type="InterPro" id="IPR000623">
    <property type="entry name" value="Shikimate_kinase/TSH1"/>
</dbReference>
<dbReference type="InterPro" id="IPR023000">
    <property type="entry name" value="Shikimate_kinase_CS"/>
</dbReference>
<dbReference type="NCBIfam" id="NF003456">
    <property type="entry name" value="PRK05057.1"/>
    <property type="match status" value="1"/>
</dbReference>
<dbReference type="PANTHER" id="PTHR21087">
    <property type="entry name" value="SHIKIMATE KINASE"/>
    <property type="match status" value="1"/>
</dbReference>
<dbReference type="PANTHER" id="PTHR21087:SF16">
    <property type="entry name" value="SHIKIMATE KINASE 1, CHLOROPLASTIC"/>
    <property type="match status" value="1"/>
</dbReference>
<dbReference type="Pfam" id="PF01202">
    <property type="entry name" value="SKI"/>
    <property type="match status" value="1"/>
</dbReference>
<dbReference type="PRINTS" id="PR01100">
    <property type="entry name" value="SHIKIMTKNASE"/>
</dbReference>
<dbReference type="SUPFAM" id="SSF52540">
    <property type="entry name" value="P-loop containing nucleoside triphosphate hydrolases"/>
    <property type="match status" value="1"/>
</dbReference>
<dbReference type="PROSITE" id="PS01128">
    <property type="entry name" value="SHIKIMATE_KINASE"/>
    <property type="match status" value="1"/>
</dbReference>
<protein>
    <recommendedName>
        <fullName evidence="1">Shikimate kinase</fullName>
        <shortName evidence="1">SK</shortName>
        <ecNumber evidence="1">2.7.1.71</ecNumber>
    </recommendedName>
</protein>
<gene>
    <name evidence="1" type="primary">aroK</name>
    <name type="ordered locus">lpg0932</name>
</gene>
<organism>
    <name type="scientific">Legionella pneumophila subsp. pneumophila (strain Philadelphia 1 / ATCC 33152 / DSM 7513)</name>
    <dbReference type="NCBI Taxonomy" id="272624"/>
    <lineage>
        <taxon>Bacteria</taxon>
        <taxon>Pseudomonadati</taxon>
        <taxon>Pseudomonadota</taxon>
        <taxon>Gammaproteobacteria</taxon>
        <taxon>Legionellales</taxon>
        <taxon>Legionellaceae</taxon>
        <taxon>Legionella</taxon>
    </lineage>
</organism>
<evidence type="ECO:0000255" key="1">
    <source>
        <dbReference type="HAMAP-Rule" id="MF_00109"/>
    </source>
</evidence>
<reference key="1">
    <citation type="journal article" date="2004" name="Science">
        <title>The genomic sequence of the accidental pathogen Legionella pneumophila.</title>
        <authorList>
            <person name="Chien M."/>
            <person name="Morozova I."/>
            <person name="Shi S."/>
            <person name="Sheng H."/>
            <person name="Chen J."/>
            <person name="Gomez S.M."/>
            <person name="Asamani G."/>
            <person name="Hill K."/>
            <person name="Nuara J."/>
            <person name="Feder M."/>
            <person name="Rineer J."/>
            <person name="Greenberg J.J."/>
            <person name="Steshenko V."/>
            <person name="Park S.H."/>
            <person name="Zhao B."/>
            <person name="Teplitskaya E."/>
            <person name="Edwards J.R."/>
            <person name="Pampou S."/>
            <person name="Georghiou A."/>
            <person name="Chou I.-C."/>
            <person name="Iannuccilli W."/>
            <person name="Ulz M.E."/>
            <person name="Kim D.H."/>
            <person name="Geringer-Sameth A."/>
            <person name="Goldsberry C."/>
            <person name="Morozov P."/>
            <person name="Fischer S.G."/>
            <person name="Segal G."/>
            <person name="Qu X."/>
            <person name="Rzhetsky A."/>
            <person name="Zhang P."/>
            <person name="Cayanis E."/>
            <person name="De Jong P.J."/>
            <person name="Ju J."/>
            <person name="Kalachikov S."/>
            <person name="Shuman H.A."/>
            <person name="Russo J.J."/>
        </authorList>
    </citation>
    <scope>NUCLEOTIDE SEQUENCE [LARGE SCALE GENOMIC DNA]</scope>
    <source>
        <strain>Philadelphia 1 / ATCC 33152 / DSM 7513</strain>
    </source>
</reference>
<comment type="function">
    <text evidence="1">Catalyzes the specific phosphorylation of the 3-hydroxyl group of shikimic acid using ATP as a cosubstrate.</text>
</comment>
<comment type="catalytic activity">
    <reaction evidence="1">
        <text>shikimate + ATP = 3-phosphoshikimate + ADP + H(+)</text>
        <dbReference type="Rhea" id="RHEA:13121"/>
        <dbReference type="ChEBI" id="CHEBI:15378"/>
        <dbReference type="ChEBI" id="CHEBI:30616"/>
        <dbReference type="ChEBI" id="CHEBI:36208"/>
        <dbReference type="ChEBI" id="CHEBI:145989"/>
        <dbReference type="ChEBI" id="CHEBI:456216"/>
        <dbReference type="EC" id="2.7.1.71"/>
    </reaction>
</comment>
<comment type="cofactor">
    <cofactor evidence="1">
        <name>Mg(2+)</name>
        <dbReference type="ChEBI" id="CHEBI:18420"/>
    </cofactor>
    <text evidence="1">Binds 1 Mg(2+) ion per subunit.</text>
</comment>
<comment type="pathway">
    <text evidence="1">Metabolic intermediate biosynthesis; chorismate biosynthesis; chorismate from D-erythrose 4-phosphate and phosphoenolpyruvate: step 5/7.</text>
</comment>
<comment type="subunit">
    <text evidence="1">Monomer.</text>
</comment>
<comment type="subcellular location">
    <subcellularLocation>
        <location evidence="1">Cytoplasm</location>
    </subcellularLocation>
</comment>
<comment type="similarity">
    <text evidence="1">Belongs to the shikimate kinase family.</text>
</comment>